<name>Y1195_STRP3</name>
<evidence type="ECO:0000255" key="1">
    <source>
        <dbReference type="PROSITE-ProRule" id="PRU00532"/>
    </source>
</evidence>
<evidence type="ECO:0000305" key="2"/>
<accession>P0DB78</accession>
<accession>Q79XS0</accession>
<accession>Q8K6Q7</accession>
<proteinExistence type="inferred from homology"/>
<protein>
    <recommendedName>
        <fullName>Uncharacterized acetyltransferase SpyM3_1195</fullName>
        <ecNumber>2.3.1.-</ecNumber>
    </recommendedName>
</protein>
<dbReference type="EC" id="2.3.1.-"/>
<dbReference type="EMBL" id="AE014074">
    <property type="protein sequence ID" value="AAM79802.1"/>
    <property type="molecule type" value="Genomic_DNA"/>
</dbReference>
<dbReference type="RefSeq" id="WP_011054720.1">
    <property type="nucleotide sequence ID" value="NC_004070.1"/>
</dbReference>
<dbReference type="SMR" id="P0DB78"/>
<dbReference type="KEGG" id="spg:SpyM3_1195"/>
<dbReference type="HOGENOM" id="CLU_056607_9_0_9"/>
<dbReference type="Proteomes" id="UP000000564">
    <property type="component" value="Chromosome"/>
</dbReference>
<dbReference type="GO" id="GO:0016747">
    <property type="term" value="F:acyltransferase activity, transferring groups other than amino-acyl groups"/>
    <property type="evidence" value="ECO:0007669"/>
    <property type="project" value="InterPro"/>
</dbReference>
<dbReference type="Gene3D" id="3.40.630.30">
    <property type="match status" value="1"/>
</dbReference>
<dbReference type="InterPro" id="IPR016181">
    <property type="entry name" value="Acyl_CoA_acyltransferase"/>
</dbReference>
<dbReference type="InterPro" id="IPR000182">
    <property type="entry name" value="GNAT_dom"/>
</dbReference>
<dbReference type="Pfam" id="PF13673">
    <property type="entry name" value="Acetyltransf_10"/>
    <property type="match status" value="1"/>
</dbReference>
<dbReference type="SUPFAM" id="SSF55729">
    <property type="entry name" value="Acyl-CoA N-acyltransferases (Nat)"/>
    <property type="match status" value="1"/>
</dbReference>
<dbReference type="PROSITE" id="PS51186">
    <property type="entry name" value="GNAT"/>
    <property type="match status" value="1"/>
</dbReference>
<reference key="1">
    <citation type="journal article" date="2002" name="Proc. Natl. Acad. Sci. U.S.A.">
        <title>Genome sequence of a serotype M3 strain of group A Streptococcus: phage-encoded toxins, the high-virulence phenotype, and clone emergence.</title>
        <authorList>
            <person name="Beres S.B."/>
            <person name="Sylva G.L."/>
            <person name="Barbian K.D."/>
            <person name="Lei B."/>
            <person name="Hoff J.S."/>
            <person name="Mammarella N.D."/>
            <person name="Liu M.-Y."/>
            <person name="Smoot J.C."/>
            <person name="Porcella S.F."/>
            <person name="Parkins L.D."/>
            <person name="Campbell D.S."/>
            <person name="Smith T.M."/>
            <person name="McCormick J.K."/>
            <person name="Leung D.Y.M."/>
            <person name="Schlievert P.M."/>
            <person name="Musser J.M."/>
        </authorList>
    </citation>
    <scope>NUCLEOTIDE SEQUENCE [LARGE SCALE GENOMIC DNA]</scope>
    <source>
        <strain>ATCC BAA-595 / MGAS315</strain>
    </source>
</reference>
<comment type="similarity">
    <text evidence="2">Belongs to the acetyltransferase family.</text>
</comment>
<feature type="chain" id="PRO_0000205421" description="Uncharacterized acetyltransferase SpyM3_1195">
    <location>
        <begin position="1"/>
        <end position="142"/>
    </location>
</feature>
<feature type="domain" description="N-acetyltransferase" evidence="1">
    <location>
        <begin position="1"/>
        <end position="120"/>
    </location>
</feature>
<sequence>MADKFDANDETRTVYAVVYDNDQPVSTGQFLAETKIEARLTRIVTLADYCGCGYGAKVTEALETYTRREGFYQLTIHSELTAQTFYENLGYQTYGPKCLEDGEYCQSLAKTILKWEKNMDIAMLIAIVGGLLGCYLYLTKNN</sequence>
<organism>
    <name type="scientific">Streptococcus pyogenes serotype M3 (strain ATCC BAA-595 / MGAS315)</name>
    <dbReference type="NCBI Taxonomy" id="198466"/>
    <lineage>
        <taxon>Bacteria</taxon>
        <taxon>Bacillati</taxon>
        <taxon>Bacillota</taxon>
        <taxon>Bacilli</taxon>
        <taxon>Lactobacillales</taxon>
        <taxon>Streptococcaceae</taxon>
        <taxon>Streptococcus</taxon>
    </lineage>
</organism>
<gene>
    <name type="ordered locus">SpyM3_1195</name>
</gene>
<keyword id="KW-0012">Acyltransferase</keyword>
<keyword id="KW-0808">Transferase</keyword>